<evidence type="ECO:0000255" key="1">
    <source>
        <dbReference type="HAMAP-Rule" id="MF_00815"/>
    </source>
</evidence>
<organism>
    <name type="scientific">Baumannia cicadellinicola subsp. Homalodisca coagulata</name>
    <dbReference type="NCBI Taxonomy" id="374463"/>
    <lineage>
        <taxon>Bacteria</taxon>
        <taxon>Pseudomonadati</taxon>
        <taxon>Pseudomonadota</taxon>
        <taxon>Gammaproteobacteria</taxon>
        <taxon>Candidatus Palibaumannia</taxon>
    </lineage>
</organism>
<dbReference type="EMBL" id="CP000238">
    <property type="protein sequence ID" value="ABF14249.1"/>
    <property type="molecule type" value="Genomic_DNA"/>
</dbReference>
<dbReference type="RefSeq" id="WP_011520344.1">
    <property type="nucleotide sequence ID" value="NC_007984.1"/>
</dbReference>
<dbReference type="SMR" id="Q1LTV3"/>
<dbReference type="STRING" id="374463.BCI_0142"/>
<dbReference type="KEGG" id="bci:BCI_0142"/>
<dbReference type="HOGENOM" id="CLU_050669_0_1_6"/>
<dbReference type="OrthoDB" id="9812769at2"/>
<dbReference type="Proteomes" id="UP000002427">
    <property type="component" value="Chromosome"/>
</dbReference>
<dbReference type="GO" id="GO:0005886">
    <property type="term" value="C:plasma membrane"/>
    <property type="evidence" value="ECO:0007669"/>
    <property type="project" value="UniProtKB-SubCell"/>
</dbReference>
<dbReference type="GO" id="GO:0045259">
    <property type="term" value="C:proton-transporting ATP synthase complex"/>
    <property type="evidence" value="ECO:0007669"/>
    <property type="project" value="UniProtKB-KW"/>
</dbReference>
<dbReference type="GO" id="GO:0005524">
    <property type="term" value="F:ATP binding"/>
    <property type="evidence" value="ECO:0007669"/>
    <property type="project" value="UniProtKB-UniRule"/>
</dbReference>
<dbReference type="GO" id="GO:0046933">
    <property type="term" value="F:proton-transporting ATP synthase activity, rotational mechanism"/>
    <property type="evidence" value="ECO:0007669"/>
    <property type="project" value="UniProtKB-UniRule"/>
</dbReference>
<dbReference type="GO" id="GO:0042777">
    <property type="term" value="P:proton motive force-driven plasma membrane ATP synthesis"/>
    <property type="evidence" value="ECO:0007669"/>
    <property type="project" value="UniProtKB-UniRule"/>
</dbReference>
<dbReference type="CDD" id="cd12151">
    <property type="entry name" value="F1-ATPase_gamma"/>
    <property type="match status" value="1"/>
</dbReference>
<dbReference type="FunFam" id="1.10.287.80:FF:000005">
    <property type="entry name" value="ATP synthase gamma chain"/>
    <property type="match status" value="1"/>
</dbReference>
<dbReference type="Gene3D" id="3.40.1380.10">
    <property type="match status" value="1"/>
</dbReference>
<dbReference type="Gene3D" id="1.10.287.80">
    <property type="entry name" value="ATP synthase, gamma subunit, helix hairpin domain"/>
    <property type="match status" value="2"/>
</dbReference>
<dbReference type="HAMAP" id="MF_00815">
    <property type="entry name" value="ATP_synth_gamma_bact"/>
    <property type="match status" value="1"/>
</dbReference>
<dbReference type="InterPro" id="IPR035968">
    <property type="entry name" value="ATP_synth_F1_ATPase_gsu"/>
</dbReference>
<dbReference type="InterPro" id="IPR000131">
    <property type="entry name" value="ATP_synth_F1_gsu"/>
</dbReference>
<dbReference type="InterPro" id="IPR023632">
    <property type="entry name" value="ATP_synth_F1_gsu_CS"/>
</dbReference>
<dbReference type="NCBIfam" id="TIGR01146">
    <property type="entry name" value="ATPsyn_F1gamma"/>
    <property type="match status" value="1"/>
</dbReference>
<dbReference type="NCBIfam" id="NF004144">
    <property type="entry name" value="PRK05621.1-1"/>
    <property type="match status" value="1"/>
</dbReference>
<dbReference type="PANTHER" id="PTHR11693">
    <property type="entry name" value="ATP SYNTHASE GAMMA CHAIN"/>
    <property type="match status" value="1"/>
</dbReference>
<dbReference type="PANTHER" id="PTHR11693:SF22">
    <property type="entry name" value="ATP SYNTHASE SUBUNIT GAMMA, MITOCHONDRIAL"/>
    <property type="match status" value="1"/>
</dbReference>
<dbReference type="Pfam" id="PF00231">
    <property type="entry name" value="ATP-synt"/>
    <property type="match status" value="1"/>
</dbReference>
<dbReference type="PRINTS" id="PR00126">
    <property type="entry name" value="ATPASEGAMMA"/>
</dbReference>
<dbReference type="SUPFAM" id="SSF52943">
    <property type="entry name" value="ATP synthase (F1-ATPase), gamma subunit"/>
    <property type="match status" value="1"/>
</dbReference>
<dbReference type="PROSITE" id="PS00153">
    <property type="entry name" value="ATPASE_GAMMA"/>
    <property type="match status" value="1"/>
</dbReference>
<proteinExistence type="inferred from homology"/>
<feature type="chain" id="PRO_1000053161" description="ATP synthase gamma chain">
    <location>
        <begin position="1"/>
        <end position="287"/>
    </location>
</feature>
<name>ATPG_BAUCH</name>
<accession>Q1LTV3</accession>
<comment type="function">
    <text evidence="1">Produces ATP from ADP in the presence of a proton gradient across the membrane. The gamma chain is believed to be important in regulating ATPase activity and the flow of protons through the CF(0) complex.</text>
</comment>
<comment type="subunit">
    <text evidence="1">F-type ATPases have 2 components, CF(1) - the catalytic core - and CF(0) - the membrane proton channel. CF(1) has five subunits: alpha(3), beta(3), gamma(1), delta(1), epsilon(1). CF(0) has three main subunits: a, b and c.</text>
</comment>
<comment type="subcellular location">
    <subcellularLocation>
        <location evidence="1">Cell inner membrane</location>
        <topology evidence="1">Peripheral membrane protein</topology>
    </subcellularLocation>
</comment>
<comment type="similarity">
    <text evidence="1">Belongs to the ATPase gamma chain family.</text>
</comment>
<keyword id="KW-0066">ATP synthesis</keyword>
<keyword id="KW-0997">Cell inner membrane</keyword>
<keyword id="KW-1003">Cell membrane</keyword>
<keyword id="KW-0139">CF(1)</keyword>
<keyword id="KW-0375">Hydrogen ion transport</keyword>
<keyword id="KW-0406">Ion transport</keyword>
<keyword id="KW-0472">Membrane</keyword>
<keyword id="KW-1185">Reference proteome</keyword>
<keyword id="KW-0813">Transport</keyword>
<protein>
    <recommendedName>
        <fullName evidence="1">ATP synthase gamma chain</fullName>
    </recommendedName>
    <alternativeName>
        <fullName evidence="1">ATP synthase F1 sector gamma subunit</fullName>
    </alternativeName>
    <alternativeName>
        <fullName evidence="1">F-ATPase gamma subunit</fullName>
    </alternativeName>
</protein>
<gene>
    <name evidence="1" type="primary">atpG</name>
    <name type="ordered locus">BCI_0142</name>
</gene>
<sequence length="287" mass="32658">MSNTKEIRSQIICIQNTKKITKAMEMVAVSKMRKTQERMLASLPYAEIIHKVIKHLTLGNLEYKHPYFHERKVKKIGYIVISTDRGLAGSLNINLFKQLLANMKKWNEQGITIELALVGCKAVNFFNLIGSKVIAQVTGITDDPKLSKLIGIIKVMLQAYDNEYLDKLYLVSNKFVNVISQIPQICQILPIPIEDKIDLKMKHWDYIYEPDSKLLLNILLQRYIESQVYQSVVENLASEQAARMVAMKAATENADTLMKELKIVYNKARQNSITQEINEIVAGASAV</sequence>
<reference key="1">
    <citation type="journal article" date="2006" name="PLoS Biol.">
        <title>Metabolic complementarity and genomics of the dual bacterial symbiosis of sharpshooters.</title>
        <authorList>
            <person name="Wu D."/>
            <person name="Daugherty S.C."/>
            <person name="Van Aken S.E."/>
            <person name="Pai G.H."/>
            <person name="Watkins K.L."/>
            <person name="Khouri H."/>
            <person name="Tallon L.J."/>
            <person name="Zaborsky J.M."/>
            <person name="Dunbar H.E."/>
            <person name="Tran P.L."/>
            <person name="Moran N.A."/>
            <person name="Eisen J.A."/>
        </authorList>
    </citation>
    <scope>NUCLEOTIDE SEQUENCE [LARGE SCALE GENOMIC DNA]</scope>
</reference>